<comment type="function">
    <text evidence="1">NDH-1 shuttles electrons from an unknown electron donor, via FMN and iron-sulfur (Fe-S) centers, to quinones in the respiratory and/or the photosynthetic chain. The immediate electron acceptor for the enzyme in this species is believed to be plastoquinone. Couples the redox reaction to proton translocation, and thus conserves the redox energy in a proton gradient. Cyanobacterial NDH-1 also plays a role in inorganic carbon-concentration (By similarity).</text>
</comment>
<comment type="catalytic activity">
    <reaction>
        <text>a plastoquinone + NADH + (n+1) H(+)(in) = a plastoquinol + NAD(+) + n H(+)(out)</text>
        <dbReference type="Rhea" id="RHEA:42608"/>
        <dbReference type="Rhea" id="RHEA-COMP:9561"/>
        <dbReference type="Rhea" id="RHEA-COMP:9562"/>
        <dbReference type="ChEBI" id="CHEBI:15378"/>
        <dbReference type="ChEBI" id="CHEBI:17757"/>
        <dbReference type="ChEBI" id="CHEBI:57540"/>
        <dbReference type="ChEBI" id="CHEBI:57945"/>
        <dbReference type="ChEBI" id="CHEBI:62192"/>
    </reaction>
</comment>
<comment type="catalytic activity">
    <reaction>
        <text>a plastoquinone + NADPH + (n+1) H(+)(in) = a plastoquinol + NADP(+) + n H(+)(out)</text>
        <dbReference type="Rhea" id="RHEA:42612"/>
        <dbReference type="Rhea" id="RHEA-COMP:9561"/>
        <dbReference type="Rhea" id="RHEA-COMP:9562"/>
        <dbReference type="ChEBI" id="CHEBI:15378"/>
        <dbReference type="ChEBI" id="CHEBI:17757"/>
        <dbReference type="ChEBI" id="CHEBI:57783"/>
        <dbReference type="ChEBI" id="CHEBI:58349"/>
        <dbReference type="ChEBI" id="CHEBI:62192"/>
    </reaction>
</comment>
<comment type="subunit">
    <text evidence="1">NDH-1 can be composed of about 15 different subunits; different subcomplexes with different compositions have been identified which probably have different functions.</text>
</comment>
<comment type="subcellular location">
    <subcellularLocation>
        <location evidence="2">Cellular thylakoid membrane</location>
        <topology evidence="2">Peripheral membrane protein</topology>
        <orientation evidence="2">Cytoplasmic side</orientation>
    </subcellularLocation>
</comment>
<comment type="similarity">
    <text evidence="2">Belongs to the complex I NdhN subunit family.</text>
</comment>
<gene>
    <name type="primary">ndhN</name>
    <name type="ordered locus">sll1262</name>
</gene>
<dbReference type="EC" id="7.1.1.-"/>
<dbReference type="EMBL" id="BA000022">
    <property type="protein sequence ID" value="BAA18145.1"/>
    <property type="molecule type" value="Genomic_DNA"/>
</dbReference>
<dbReference type="PIR" id="S75584">
    <property type="entry name" value="S75584"/>
</dbReference>
<dbReference type="SMR" id="P74069"/>
<dbReference type="IntAct" id="P74069">
    <property type="interactions" value="5"/>
</dbReference>
<dbReference type="STRING" id="1148.gene:10499017"/>
<dbReference type="PaxDb" id="1148-1653230"/>
<dbReference type="EnsemblBacteria" id="BAA18145">
    <property type="protein sequence ID" value="BAA18145"/>
    <property type="gene ID" value="BAA18145"/>
</dbReference>
<dbReference type="KEGG" id="syn:sll1262"/>
<dbReference type="eggNOG" id="ENOG502ZBMI">
    <property type="taxonomic scope" value="Bacteria"/>
</dbReference>
<dbReference type="InParanoid" id="P74069"/>
<dbReference type="PhylomeDB" id="P74069"/>
<dbReference type="Proteomes" id="UP000001425">
    <property type="component" value="Chromosome"/>
</dbReference>
<dbReference type="GO" id="GO:0031676">
    <property type="term" value="C:plasma membrane-derived thylakoid membrane"/>
    <property type="evidence" value="ECO:0007669"/>
    <property type="project" value="UniProtKB-SubCell"/>
</dbReference>
<dbReference type="GO" id="GO:0016655">
    <property type="term" value="F:oxidoreductase activity, acting on NAD(P)H, quinone or similar compound as acceptor"/>
    <property type="evidence" value="ECO:0007669"/>
    <property type="project" value="UniProtKB-UniRule"/>
</dbReference>
<dbReference type="GO" id="GO:0048038">
    <property type="term" value="F:quinone binding"/>
    <property type="evidence" value="ECO:0007669"/>
    <property type="project" value="UniProtKB-KW"/>
</dbReference>
<dbReference type="HAMAP" id="MF_01353">
    <property type="entry name" value="NDH1_NDH1N"/>
    <property type="match status" value="1"/>
</dbReference>
<dbReference type="InterPro" id="IPR020874">
    <property type="entry name" value="NAD(P)H-quinone_OxRdtase_su_N"/>
</dbReference>
<dbReference type="PANTHER" id="PTHR35515">
    <property type="entry name" value="NAD(P)H-QUINONE OXIDOREDUCTASE SUBUNIT N, CHLOROPLASTIC"/>
    <property type="match status" value="1"/>
</dbReference>
<dbReference type="PANTHER" id="PTHR35515:SF1">
    <property type="entry name" value="NAD(P)H-QUINONE OXIDOREDUCTASE SUBUNIT N, CHLOROPLASTIC"/>
    <property type="match status" value="1"/>
</dbReference>
<dbReference type="Pfam" id="PF11909">
    <property type="entry name" value="NdhN"/>
    <property type="match status" value="1"/>
</dbReference>
<keyword id="KW-0903">Direct protein sequencing</keyword>
<keyword id="KW-0472">Membrane</keyword>
<keyword id="KW-0520">NAD</keyword>
<keyword id="KW-0521">NADP</keyword>
<keyword id="KW-0618">Plastoquinone</keyword>
<keyword id="KW-0874">Quinone</keyword>
<keyword id="KW-1185">Reference proteome</keyword>
<keyword id="KW-0793">Thylakoid</keyword>
<keyword id="KW-1278">Translocase</keyword>
<keyword id="KW-0813">Transport</keyword>
<proteinExistence type="evidence at protein level"/>
<sequence>MLPLPLIANGKGFIRALENDGALAVYAPLEGGYEGRYQRRLRANGYASISLSARGLGDVEAYLMQVHGVRPAHLGKKNIAQEGAVGPIYFAQPIAGYQLENLPAQSKGLVLWILEGYILSQTEIQDLISLTKRVPKLKVVLEMGGDRVFRWQPLLDCLQAA</sequence>
<protein>
    <recommendedName>
        <fullName>NAD(P)H-quinone oxidoreductase subunit N</fullName>
        <ecNumber>7.1.1.-</ecNumber>
    </recommendedName>
    <alternativeName>
        <fullName>NAD(P)H dehydrogenase I subunit N</fullName>
        <shortName>NDH-1 subunit N</shortName>
        <shortName>NDH-N</shortName>
    </alternativeName>
</protein>
<organism>
    <name type="scientific">Synechocystis sp. (strain ATCC 27184 / PCC 6803 / Kazusa)</name>
    <dbReference type="NCBI Taxonomy" id="1111708"/>
    <lineage>
        <taxon>Bacteria</taxon>
        <taxon>Bacillati</taxon>
        <taxon>Cyanobacteriota</taxon>
        <taxon>Cyanophyceae</taxon>
        <taxon>Synechococcales</taxon>
        <taxon>Merismopediaceae</taxon>
        <taxon>Synechocystis</taxon>
    </lineage>
</organism>
<name>NDHN_SYNY3</name>
<evidence type="ECO:0000250" key="1"/>
<evidence type="ECO:0000305" key="2"/>
<feature type="chain" id="PRO_0000352243" description="NAD(P)H-quinone oxidoreductase subunit N">
    <location>
        <begin position="1"/>
        <end position="161"/>
    </location>
</feature>
<reference key="1">
    <citation type="journal article" date="1996" name="DNA Res.">
        <title>Sequence analysis of the genome of the unicellular cyanobacterium Synechocystis sp. strain PCC6803. II. Sequence determination of the entire genome and assignment of potential protein-coding regions.</title>
        <authorList>
            <person name="Kaneko T."/>
            <person name="Sato S."/>
            <person name="Kotani H."/>
            <person name="Tanaka A."/>
            <person name="Asamizu E."/>
            <person name="Nakamura Y."/>
            <person name="Miyajima N."/>
            <person name="Hirosawa M."/>
            <person name="Sugiura M."/>
            <person name="Sasamoto S."/>
            <person name="Kimura T."/>
            <person name="Hosouchi T."/>
            <person name="Matsuno A."/>
            <person name="Muraki A."/>
            <person name="Nakazaki N."/>
            <person name="Naruo K."/>
            <person name="Okumura S."/>
            <person name="Shimpo S."/>
            <person name="Takeuchi C."/>
            <person name="Wada T."/>
            <person name="Watanabe A."/>
            <person name="Yamada M."/>
            <person name="Yasuda M."/>
            <person name="Tabata S."/>
        </authorList>
    </citation>
    <scope>NUCLEOTIDE SEQUENCE [LARGE SCALE GENOMIC DNA]</scope>
    <source>
        <strain>ATCC 27184 / PCC 6803 / Kazusa</strain>
    </source>
</reference>
<reference key="2">
    <citation type="journal article" date="2004" name="J. Biol. Chem.">
        <title>Subunit composition of NDH-1 complexes of Synechocystis sp. PCC 6803: identification of two new ndh gene products with nuclear-encoded homologues in the chloroplast Ndh complex.</title>
        <authorList>
            <person name="Prommeenate P."/>
            <person name="Lennon A.M."/>
            <person name="Markert C."/>
            <person name="Hippler M."/>
            <person name="Nixon P.J."/>
        </authorList>
    </citation>
    <scope>PROTEIN SEQUENCE OF 1-8</scope>
    <scope>CHARACTERIZATION AS A MEMBER OF THE NAD(P)H-QUINONE OXIDOREDUCTASE COMPLEX</scope>
    <scope>SUBCOMPLEXES OF NDH-1</scope>
</reference>
<reference key="3">
    <citation type="journal article" date="2005" name="J. Biol. Chem.">
        <title>Identification of NdhL and Ssl1690 (NdhO) in NDH-1L and NDH-1M complexes of Synechocystis sp. PCC 6803.</title>
        <authorList>
            <person name="Battchikova N."/>
            <person name="Zhang P."/>
            <person name="Rudd S."/>
            <person name="Ogawa T."/>
            <person name="Aro E.-M."/>
        </authorList>
    </citation>
    <scope>PROTEIN SEQUENCE OF 16-36; 43-70; 78-107 AND 139-147</scope>
    <scope>SUBCOMPLEXES OF NDH-1</scope>
</reference>
<accession>P74069</accession>